<dbReference type="EC" id="2.7.9.4"/>
<dbReference type="EMBL" id="AL078637">
    <property type="protein sequence ID" value="CAB45080.1"/>
    <property type="status" value="ALT_SEQ"/>
    <property type="molecule type" value="Genomic_DNA"/>
</dbReference>
<dbReference type="EMBL" id="AL161561">
    <property type="protein sequence ID" value="CAB79355.1"/>
    <property type="status" value="ALT_SEQ"/>
    <property type="molecule type" value="Genomic_DNA"/>
</dbReference>
<dbReference type="EMBL" id="CP002687">
    <property type="protein sequence ID" value="AEE84906.1"/>
    <property type="molecule type" value="Genomic_DNA"/>
</dbReference>
<dbReference type="EMBL" id="CP002687">
    <property type="protein sequence ID" value="ANM67023.1"/>
    <property type="molecule type" value="Genomic_DNA"/>
</dbReference>
<dbReference type="EMBL" id="CP002687">
    <property type="protein sequence ID" value="ANM67024.1"/>
    <property type="molecule type" value="Genomic_DNA"/>
</dbReference>
<dbReference type="EMBL" id="BT004118">
    <property type="protein sequence ID" value="AAO42141.1"/>
    <property type="molecule type" value="mRNA"/>
</dbReference>
<dbReference type="PIR" id="T09908">
    <property type="entry name" value="T09908"/>
</dbReference>
<dbReference type="FunCoup" id="Q9STV0">
    <property type="interactions" value="2"/>
</dbReference>
<dbReference type="STRING" id="3702.Q9STV0"/>
<dbReference type="CAZy" id="CBM45">
    <property type="family name" value="Carbohydrate-Binding Module Family 45"/>
</dbReference>
<dbReference type="iPTMnet" id="Q9STV0"/>
<dbReference type="PaxDb" id="3702-AT4G24450.1"/>
<dbReference type="ProteomicsDB" id="247276"/>
<dbReference type="EnsemblPlants" id="AT4G24450.1">
    <property type="protein sequence ID" value="AT4G24450.1"/>
    <property type="gene ID" value="AT4G24450"/>
</dbReference>
<dbReference type="EnsemblPlants" id="AT4G24450.2">
    <property type="protein sequence ID" value="AT4G24450.2"/>
    <property type="gene ID" value="AT4G24450"/>
</dbReference>
<dbReference type="EnsemblPlants" id="AT4G24450.3">
    <property type="protein sequence ID" value="AT4G24450.3"/>
    <property type="gene ID" value="AT4G24450"/>
</dbReference>
<dbReference type="GeneID" id="828547"/>
<dbReference type="Gramene" id="AT4G24450.1">
    <property type="protein sequence ID" value="AT4G24450.1"/>
    <property type="gene ID" value="AT4G24450"/>
</dbReference>
<dbReference type="Gramene" id="AT4G24450.2">
    <property type="protein sequence ID" value="AT4G24450.2"/>
    <property type="gene ID" value="AT4G24450"/>
</dbReference>
<dbReference type="Gramene" id="AT4G24450.3">
    <property type="protein sequence ID" value="AT4G24450.3"/>
    <property type="gene ID" value="AT4G24450"/>
</dbReference>
<dbReference type="KEGG" id="ath:AT4G24450"/>
<dbReference type="Araport" id="AT4G24450"/>
<dbReference type="TAIR" id="AT4G24450">
    <property type="gene designation" value="PWD"/>
</dbReference>
<dbReference type="eggNOG" id="ENOG502QSQR">
    <property type="taxonomic scope" value="Eukaryota"/>
</dbReference>
<dbReference type="HOGENOM" id="CLU_002399_1_0_1"/>
<dbReference type="InParanoid" id="Q9STV0"/>
<dbReference type="OMA" id="SFHVRNY"/>
<dbReference type="BioCyc" id="ARA:AT4G24450-MONOMER"/>
<dbReference type="BRENDA" id="2.7.9.4">
    <property type="organism ID" value="399"/>
</dbReference>
<dbReference type="PRO" id="PR:Q9STV0"/>
<dbReference type="Proteomes" id="UP000006548">
    <property type="component" value="Chromosome 4"/>
</dbReference>
<dbReference type="ExpressionAtlas" id="Q9STV0">
    <property type="expression patterns" value="baseline and differential"/>
</dbReference>
<dbReference type="GO" id="GO:0009941">
    <property type="term" value="C:chloroplast envelope"/>
    <property type="evidence" value="ECO:0007005"/>
    <property type="project" value="TAIR"/>
</dbReference>
<dbReference type="GO" id="GO:0050521">
    <property type="term" value="F:alpha-glucan, water dikinase activity"/>
    <property type="evidence" value="ECO:0007669"/>
    <property type="project" value="UniProtKB-EC"/>
</dbReference>
<dbReference type="GO" id="GO:0005524">
    <property type="term" value="F:ATP binding"/>
    <property type="evidence" value="ECO:0007669"/>
    <property type="project" value="UniProtKB-KW"/>
</dbReference>
<dbReference type="GO" id="GO:0046872">
    <property type="term" value="F:metal ion binding"/>
    <property type="evidence" value="ECO:0007669"/>
    <property type="project" value="UniProtKB-KW"/>
</dbReference>
<dbReference type="FunFam" id="3.30.470.20:FF:000070">
    <property type="entry name" value="Alpha-glucan water dikinase 2"/>
    <property type="match status" value="1"/>
</dbReference>
<dbReference type="Gene3D" id="3.30.1490.20">
    <property type="entry name" value="ATP-grasp fold, A domain"/>
    <property type="match status" value="1"/>
</dbReference>
<dbReference type="Gene3D" id="3.30.470.20">
    <property type="entry name" value="ATP-grasp fold, B domain"/>
    <property type="match status" value="1"/>
</dbReference>
<dbReference type="InterPro" id="IPR013815">
    <property type="entry name" value="ATP_grasp_subdomain_1"/>
</dbReference>
<dbReference type="InterPro" id="IPR055495">
    <property type="entry name" value="CWD_DUF7067"/>
</dbReference>
<dbReference type="InterPro" id="IPR056301">
    <property type="entry name" value="GWD-like_N_Ig"/>
</dbReference>
<dbReference type="InterPro" id="IPR054481">
    <property type="entry name" value="GWD1_pHisD"/>
</dbReference>
<dbReference type="InterPro" id="IPR002192">
    <property type="entry name" value="PPDK_AMP/ATP-bd"/>
</dbReference>
<dbReference type="PANTHER" id="PTHR46999">
    <property type="entry name" value="ALPHA-GLUCAN WATER DIKINASE 1, CHLOROPLASTIC-RELATED"/>
    <property type="match status" value="1"/>
</dbReference>
<dbReference type="PANTHER" id="PTHR46999:SF4">
    <property type="entry name" value="ALPHA-GLUCAN WATER DIKINASE 2"/>
    <property type="match status" value="1"/>
</dbReference>
<dbReference type="Pfam" id="PF23229">
    <property type="entry name" value="DUF7067"/>
    <property type="match status" value="1"/>
</dbReference>
<dbReference type="Pfam" id="PF22973">
    <property type="entry name" value="GWD1_pHisD"/>
    <property type="match status" value="1"/>
</dbReference>
<dbReference type="Pfam" id="PF23166">
    <property type="entry name" value="Ig_N_CWD1"/>
    <property type="match status" value="2"/>
</dbReference>
<dbReference type="Pfam" id="PF01326">
    <property type="entry name" value="PPDK_N"/>
    <property type="match status" value="1"/>
</dbReference>
<dbReference type="SUPFAM" id="SSF56059">
    <property type="entry name" value="Glutathione synthetase ATP-binding domain-like"/>
    <property type="match status" value="1"/>
</dbReference>
<feature type="signal peptide" evidence="2">
    <location>
        <begin position="1"/>
        <end position="23"/>
    </location>
</feature>
<feature type="chain" id="PRO_0000240249" description="Alpha-glucan water dikinase 2">
    <location>
        <begin position="24"/>
        <end position="1278"/>
    </location>
</feature>
<feature type="active site" description="Tele-phosphohistidine intermediate" evidence="1">
    <location>
        <position position="886"/>
    </location>
</feature>
<feature type="sequence conflict" description="In Ref. 3; AAO42141." evidence="3" ref="3">
    <original>S</original>
    <variation>N</variation>
    <location>
        <position position="103"/>
    </location>
</feature>
<feature type="sequence conflict" description="In Ref. 3; AAO42141." evidence="3" ref="3">
    <original>R</original>
    <variation>G</variation>
    <location>
        <position position="254"/>
    </location>
</feature>
<feature type="sequence conflict" description="In Ref. 3; AAO42141." evidence="3" ref="3">
    <original>Q</original>
    <variation>R</variation>
    <location>
        <position position="630"/>
    </location>
</feature>
<keyword id="KW-0067">ATP-binding</keyword>
<keyword id="KW-0119">Carbohydrate metabolism</keyword>
<keyword id="KW-0418">Kinase</keyword>
<keyword id="KW-0460">Magnesium</keyword>
<keyword id="KW-0479">Metal-binding</keyword>
<keyword id="KW-0547">Nucleotide-binding</keyword>
<keyword id="KW-1185">Reference proteome</keyword>
<keyword id="KW-0732">Signal</keyword>
<keyword id="KW-0808">Transferase</keyword>
<evidence type="ECO:0000250" key="1"/>
<evidence type="ECO:0000255" key="2"/>
<evidence type="ECO:0000305" key="3"/>
<proteinExistence type="evidence at transcript level"/>
<name>GWD2_ARATH</name>
<comment type="function">
    <text evidence="1">Mediates the incorporation of phosphate into alpha-glucan, mostly at the C-6 position of glucose units.</text>
</comment>
<comment type="catalytic activity">
    <reaction>
        <text>[(1-&gt;4)-alpha-D-glucosyl](n) + n ATP + n H2O = [(1-&gt;4)-6-phospho-alpha-D-glucosyl](n) + n AMP + n phosphate + 2n H(+)</text>
        <dbReference type="Rhea" id="RHEA:11668"/>
        <dbReference type="Rhea" id="RHEA-COMP:9584"/>
        <dbReference type="Rhea" id="RHEA-COMP:12983"/>
        <dbReference type="ChEBI" id="CHEBI:15377"/>
        <dbReference type="ChEBI" id="CHEBI:15378"/>
        <dbReference type="ChEBI" id="CHEBI:15444"/>
        <dbReference type="ChEBI" id="CHEBI:30616"/>
        <dbReference type="ChEBI" id="CHEBI:43474"/>
        <dbReference type="ChEBI" id="CHEBI:134068"/>
        <dbReference type="ChEBI" id="CHEBI:456215"/>
        <dbReference type="EC" id="2.7.9.4"/>
    </reaction>
</comment>
<comment type="cofactor">
    <cofactor evidence="1">
        <name>Mg(2+)</name>
        <dbReference type="ChEBI" id="CHEBI:18420"/>
    </cofactor>
</comment>
<comment type="subunit">
    <text evidence="1">Homodimer.</text>
</comment>
<comment type="domain">
    <text evidence="1">The N-terminal domain contains the alpha-glucan binding site, the central domain the pyrophosphate/phosphate carrier histidine, and the C-terminal domain the ATP binding site.</text>
</comment>
<comment type="miscellaneous">
    <text evidence="1">The reaction takes place in three steps, mediated by a phosphocarrier histidine residue located on the surface of the central domain. The two first partial reactions are catalyzed at an active site located on the C-terminal domain, and the third partial reaction is catalyzed at an active site located on the N-terminal domain. For catalytic turnover, the central domain swivels from the concave surface of the C-terminal domain to that of the B-terminal domain (By similarity).</text>
</comment>
<comment type="similarity">
    <text evidence="3">Belongs to the PEP-utilizing enzyme family.</text>
</comment>
<comment type="sequence caution" evidence="3">
    <conflict type="erroneous gene model prediction">
        <sequence resource="EMBL-CDS" id="CAB45080"/>
    </conflict>
</comment>
<comment type="sequence caution" evidence="3">
    <conflict type="erroneous gene model prediction">
        <sequence resource="EMBL-CDS" id="CAB79355"/>
    </conflict>
</comment>
<accession>Q9STV0</accession>
<accession>Q84W86</accession>
<reference key="1">
    <citation type="journal article" date="1999" name="Nature">
        <title>Sequence and analysis of chromosome 4 of the plant Arabidopsis thaliana.</title>
        <authorList>
            <person name="Mayer K.F.X."/>
            <person name="Schueller C."/>
            <person name="Wambutt R."/>
            <person name="Murphy G."/>
            <person name="Volckaert G."/>
            <person name="Pohl T."/>
            <person name="Duesterhoeft A."/>
            <person name="Stiekema W."/>
            <person name="Entian K.-D."/>
            <person name="Terryn N."/>
            <person name="Harris B."/>
            <person name="Ansorge W."/>
            <person name="Brandt P."/>
            <person name="Grivell L.A."/>
            <person name="Rieger M."/>
            <person name="Weichselgartner M."/>
            <person name="de Simone V."/>
            <person name="Obermaier B."/>
            <person name="Mache R."/>
            <person name="Mueller M."/>
            <person name="Kreis M."/>
            <person name="Delseny M."/>
            <person name="Puigdomenech P."/>
            <person name="Watson M."/>
            <person name="Schmidtheini T."/>
            <person name="Reichert B."/>
            <person name="Portetelle D."/>
            <person name="Perez-Alonso M."/>
            <person name="Boutry M."/>
            <person name="Bancroft I."/>
            <person name="Vos P."/>
            <person name="Hoheisel J."/>
            <person name="Zimmermann W."/>
            <person name="Wedler H."/>
            <person name="Ridley P."/>
            <person name="Langham S.-A."/>
            <person name="McCullagh B."/>
            <person name="Bilham L."/>
            <person name="Robben J."/>
            <person name="van der Schueren J."/>
            <person name="Grymonprez B."/>
            <person name="Chuang Y.-J."/>
            <person name="Vandenbussche F."/>
            <person name="Braeken M."/>
            <person name="Weltjens I."/>
            <person name="Voet M."/>
            <person name="Bastiaens I."/>
            <person name="Aert R."/>
            <person name="Defoor E."/>
            <person name="Weitzenegger T."/>
            <person name="Bothe G."/>
            <person name="Ramsperger U."/>
            <person name="Hilbert H."/>
            <person name="Braun M."/>
            <person name="Holzer E."/>
            <person name="Brandt A."/>
            <person name="Peters S."/>
            <person name="van Staveren M."/>
            <person name="Dirkse W."/>
            <person name="Mooijman P."/>
            <person name="Klein Lankhorst R."/>
            <person name="Rose M."/>
            <person name="Hauf J."/>
            <person name="Koetter P."/>
            <person name="Berneiser S."/>
            <person name="Hempel S."/>
            <person name="Feldpausch M."/>
            <person name="Lamberth S."/>
            <person name="Van den Daele H."/>
            <person name="De Keyser A."/>
            <person name="Buysshaert C."/>
            <person name="Gielen J."/>
            <person name="Villarroel R."/>
            <person name="De Clercq R."/>
            <person name="van Montagu M."/>
            <person name="Rogers J."/>
            <person name="Cronin A."/>
            <person name="Quail M.A."/>
            <person name="Bray-Allen S."/>
            <person name="Clark L."/>
            <person name="Doggett J."/>
            <person name="Hall S."/>
            <person name="Kay M."/>
            <person name="Lennard N."/>
            <person name="McLay K."/>
            <person name="Mayes R."/>
            <person name="Pettett A."/>
            <person name="Rajandream M.A."/>
            <person name="Lyne M."/>
            <person name="Benes V."/>
            <person name="Rechmann S."/>
            <person name="Borkova D."/>
            <person name="Bloecker H."/>
            <person name="Scharfe M."/>
            <person name="Grimm M."/>
            <person name="Loehnert T.-H."/>
            <person name="Dose S."/>
            <person name="de Haan M."/>
            <person name="Maarse A.C."/>
            <person name="Schaefer M."/>
            <person name="Mueller-Auer S."/>
            <person name="Gabel C."/>
            <person name="Fuchs M."/>
            <person name="Fartmann B."/>
            <person name="Granderath K."/>
            <person name="Dauner D."/>
            <person name="Herzl A."/>
            <person name="Neumann S."/>
            <person name="Argiriou A."/>
            <person name="Vitale D."/>
            <person name="Liguori R."/>
            <person name="Piravandi E."/>
            <person name="Massenet O."/>
            <person name="Quigley F."/>
            <person name="Clabauld G."/>
            <person name="Muendlein A."/>
            <person name="Felber R."/>
            <person name="Schnabl S."/>
            <person name="Hiller R."/>
            <person name="Schmidt W."/>
            <person name="Lecharny A."/>
            <person name="Aubourg S."/>
            <person name="Chefdor F."/>
            <person name="Cooke R."/>
            <person name="Berger C."/>
            <person name="Monfort A."/>
            <person name="Casacuberta E."/>
            <person name="Gibbons T."/>
            <person name="Weber N."/>
            <person name="Vandenbol M."/>
            <person name="Bargues M."/>
            <person name="Terol J."/>
            <person name="Torres A."/>
            <person name="Perez-Perez A."/>
            <person name="Purnelle B."/>
            <person name="Bent E."/>
            <person name="Johnson S."/>
            <person name="Tacon D."/>
            <person name="Jesse T."/>
            <person name="Heijnen L."/>
            <person name="Schwarz S."/>
            <person name="Scholler P."/>
            <person name="Heber S."/>
            <person name="Francs P."/>
            <person name="Bielke C."/>
            <person name="Frishman D."/>
            <person name="Haase D."/>
            <person name="Lemcke K."/>
            <person name="Mewes H.-W."/>
            <person name="Stocker S."/>
            <person name="Zaccaria P."/>
            <person name="Bevan M."/>
            <person name="Wilson R.K."/>
            <person name="de la Bastide M."/>
            <person name="Habermann K."/>
            <person name="Parnell L."/>
            <person name="Dedhia N."/>
            <person name="Gnoj L."/>
            <person name="Schutz K."/>
            <person name="Huang E."/>
            <person name="Spiegel L."/>
            <person name="Sekhon M."/>
            <person name="Murray J."/>
            <person name="Sheet P."/>
            <person name="Cordes M."/>
            <person name="Abu-Threideh J."/>
            <person name="Stoneking T."/>
            <person name="Kalicki J."/>
            <person name="Graves T."/>
            <person name="Harmon G."/>
            <person name="Edwards J."/>
            <person name="Latreille P."/>
            <person name="Courtney L."/>
            <person name="Cloud J."/>
            <person name="Abbott A."/>
            <person name="Scott K."/>
            <person name="Johnson D."/>
            <person name="Minx P."/>
            <person name="Bentley D."/>
            <person name="Fulton B."/>
            <person name="Miller N."/>
            <person name="Greco T."/>
            <person name="Kemp K."/>
            <person name="Kramer J."/>
            <person name="Fulton L."/>
            <person name="Mardis E."/>
            <person name="Dante M."/>
            <person name="Pepin K."/>
            <person name="Hillier L.W."/>
            <person name="Nelson J."/>
            <person name="Spieth J."/>
            <person name="Ryan E."/>
            <person name="Andrews S."/>
            <person name="Geisel C."/>
            <person name="Layman D."/>
            <person name="Du H."/>
            <person name="Ali J."/>
            <person name="Berghoff A."/>
            <person name="Jones K."/>
            <person name="Drone K."/>
            <person name="Cotton M."/>
            <person name="Joshu C."/>
            <person name="Antonoiu B."/>
            <person name="Zidanic M."/>
            <person name="Strong C."/>
            <person name="Sun H."/>
            <person name="Lamar B."/>
            <person name="Yordan C."/>
            <person name="Ma P."/>
            <person name="Zhong J."/>
            <person name="Preston R."/>
            <person name="Vil D."/>
            <person name="Shekher M."/>
            <person name="Matero A."/>
            <person name="Shah R."/>
            <person name="Swaby I.K."/>
            <person name="O'Shaughnessy A."/>
            <person name="Rodriguez M."/>
            <person name="Hoffman J."/>
            <person name="Till S."/>
            <person name="Granat S."/>
            <person name="Shohdy N."/>
            <person name="Hasegawa A."/>
            <person name="Hameed A."/>
            <person name="Lodhi M."/>
            <person name="Johnson A."/>
            <person name="Chen E."/>
            <person name="Marra M.A."/>
            <person name="Martienssen R."/>
            <person name="McCombie W.R."/>
        </authorList>
    </citation>
    <scope>NUCLEOTIDE SEQUENCE [LARGE SCALE GENOMIC DNA]</scope>
    <source>
        <strain>cv. Columbia</strain>
    </source>
</reference>
<reference key="2">
    <citation type="journal article" date="2017" name="Plant J.">
        <title>Araport11: a complete reannotation of the Arabidopsis thaliana reference genome.</title>
        <authorList>
            <person name="Cheng C.Y."/>
            <person name="Krishnakumar V."/>
            <person name="Chan A.P."/>
            <person name="Thibaud-Nissen F."/>
            <person name="Schobel S."/>
            <person name="Town C.D."/>
        </authorList>
    </citation>
    <scope>GENOME REANNOTATION</scope>
    <source>
        <strain>cv. Columbia</strain>
    </source>
</reference>
<reference key="3">
    <citation type="journal article" date="2003" name="Science">
        <title>Empirical analysis of transcriptional activity in the Arabidopsis genome.</title>
        <authorList>
            <person name="Yamada K."/>
            <person name="Lim J."/>
            <person name="Dale J.M."/>
            <person name="Chen H."/>
            <person name="Shinn P."/>
            <person name="Palm C.J."/>
            <person name="Southwick A.M."/>
            <person name="Wu H.C."/>
            <person name="Kim C.J."/>
            <person name="Nguyen M."/>
            <person name="Pham P.K."/>
            <person name="Cheuk R.F."/>
            <person name="Karlin-Newmann G."/>
            <person name="Liu S.X."/>
            <person name="Lam B."/>
            <person name="Sakano H."/>
            <person name="Wu T."/>
            <person name="Yu G."/>
            <person name="Miranda M."/>
            <person name="Quach H.L."/>
            <person name="Tripp M."/>
            <person name="Chang C.H."/>
            <person name="Lee J.M."/>
            <person name="Toriumi M.J."/>
            <person name="Chan M.M."/>
            <person name="Tang C.C."/>
            <person name="Onodera C.S."/>
            <person name="Deng J.M."/>
            <person name="Akiyama K."/>
            <person name="Ansari Y."/>
            <person name="Arakawa T."/>
            <person name="Banh J."/>
            <person name="Banno F."/>
            <person name="Bowser L."/>
            <person name="Brooks S.Y."/>
            <person name="Carninci P."/>
            <person name="Chao Q."/>
            <person name="Choy N."/>
            <person name="Enju A."/>
            <person name="Goldsmith A.D."/>
            <person name="Gurjal M."/>
            <person name="Hansen N.F."/>
            <person name="Hayashizaki Y."/>
            <person name="Johnson-Hopson C."/>
            <person name="Hsuan V.W."/>
            <person name="Iida K."/>
            <person name="Karnes M."/>
            <person name="Khan S."/>
            <person name="Koesema E."/>
            <person name="Ishida J."/>
            <person name="Jiang P.X."/>
            <person name="Jones T."/>
            <person name="Kawai J."/>
            <person name="Kamiya A."/>
            <person name="Meyers C."/>
            <person name="Nakajima M."/>
            <person name="Narusaka M."/>
            <person name="Seki M."/>
            <person name="Sakurai T."/>
            <person name="Satou M."/>
            <person name="Tamse R."/>
            <person name="Vaysberg M."/>
            <person name="Wallender E.K."/>
            <person name="Wong C."/>
            <person name="Yamamura Y."/>
            <person name="Yuan S."/>
            <person name="Shinozaki K."/>
            <person name="Davis R.W."/>
            <person name="Theologis A."/>
            <person name="Ecker J.R."/>
        </authorList>
    </citation>
    <scope>NUCLEOTIDE SEQUENCE [LARGE SCALE MRNA]</scope>
    <source>
        <strain>cv. Columbia</strain>
    </source>
</reference>
<protein>
    <recommendedName>
        <fullName>Alpha-glucan water dikinase 2</fullName>
        <ecNumber>2.7.9.4</ecNumber>
    </recommendedName>
</protein>
<organism>
    <name type="scientific">Arabidopsis thaliana</name>
    <name type="common">Mouse-ear cress</name>
    <dbReference type="NCBI Taxonomy" id="3702"/>
    <lineage>
        <taxon>Eukaryota</taxon>
        <taxon>Viridiplantae</taxon>
        <taxon>Streptophyta</taxon>
        <taxon>Embryophyta</taxon>
        <taxon>Tracheophyta</taxon>
        <taxon>Spermatophyta</taxon>
        <taxon>Magnoliopsida</taxon>
        <taxon>eudicotyledons</taxon>
        <taxon>Gunneridae</taxon>
        <taxon>Pentapetalae</taxon>
        <taxon>rosids</taxon>
        <taxon>malvids</taxon>
        <taxon>Brassicales</taxon>
        <taxon>Brassicaceae</taxon>
        <taxon>Camelineae</taxon>
        <taxon>Arabidopsis</taxon>
    </lineage>
</organism>
<gene>
    <name type="primary">GWD2</name>
    <name type="ordered locus">At4g24450</name>
    <name type="ORF">T22A6.280</name>
</gene>
<sequence>MATSKSQQFQLIEGMELQITVTGLPNGSSVRAEFHLKNCTRAWILHWGCIYQGNNHWYIPSEHSSKQGALQTTFVKSGDAYVVILELRDPRVRAIEFVLKDGSHNRWLRQHNGNFRVEIPWNDLHAHHRIPKTLIERRAHKIWDRKGRPQSSAREQQIDYDNAVRELHAELARGISLDELQANSTVPVEKEETSEPHHTMIQSYRRKHDVQKWLQKYTEPINRSGSVKSSALAELSKRSVGQENLVSQKSFHVRNYEITVLQRDVKGDCRLWIATNMAGPTVLHWGVAKSSAGEWLIPPPDVLPEKSKFVHGACQTQFTDMSSREHSYQFIDINLKRGGFVGIQFVIWSGGYWVNNNGANFVVNLKSADSTSGKLDVDEKYVLKWLLDEISEREKEAERSLMHRFNIATELTERCKDEGEGGCIGIMVWMRFMATRHLTWNKNYNVKPREISEALERFTNLMEKIYLQQPNKREIVRLTMALVGRGGQGDVGQRIRDEILVIQRNNHCKSGMMEEWHQKLHNNSSADDVIICEALLNYVRSDFRIDAYWQTLQTNGLTKERLASYDRPIVSEPRFRSDSKEGLIRDLTMYLKTLKAVHSGADLESAIDTFLSPSKGHHVFAVNGLSPKLQDLLNLVKRLVREENTEPLIEKLVDARIQLHPALRAPRTRAKDLLFLDIALESCFKTTIEKRLISLNFNNPPEIIYVICVVLENLCLSIVNNEEIIFCTKDWYRVSEAYRPHDVQWALQTKAVLDRLQLVLADRCQHYFTIIQPTAKYLGQLLRVDKHGIDVFTEEVIRAGPGAVLSTLVNRFDPSLRKIANLGCWQVISSADAYGFVVCVNELIVVQNKFYSKPTVIIASKVTGEEEIPAGVVAVLTPSMIDVLSHVSIRARNSKICFATCFDQNVLSNLKSKEGRAISIHTKSTGLVISDGNNSDVSVRHIFISSVPRGVISKGKKFCGHYVISSKEFTDERVGSKSYNIKFLRERVPSWIKIPTSAALPFGTFENILSDDSNKDVARRISVLKDSLNRGDLTKLKSIQEAILQMSAPMALRNELITKLRSERMPYLGDESGWNRSWVAIKKVWASKWNERAYVSCKKNKLDHDAVCMAVLIQEVICGDYAFVIHTNNPVSGDSSEIYTEIVKGLGETLVGAYPGRAMSFITKKTNLKSPTVISYPSKRIGLYSKPSIIFRSDSNNEDLEGNAGAGLYDSVIMDEAEEVVVDYSREPLIMDKSFRVRLFSAIAEAGNVIESIYGCPQDIEGVVKGGHIYIVQARPQV</sequence>